<accession>Q54NL0</accession>
<keyword id="KW-0175">Coiled coil</keyword>
<keyword id="KW-0963">Cytoplasm</keyword>
<keyword id="KW-0343">GTPase activation</keyword>
<keyword id="KW-1185">Reference proteome</keyword>
<reference key="1">
    <citation type="journal article" date="2005" name="Nature">
        <title>The genome of the social amoeba Dictyostelium discoideum.</title>
        <authorList>
            <person name="Eichinger L."/>
            <person name="Pachebat J.A."/>
            <person name="Gloeckner G."/>
            <person name="Rajandream M.A."/>
            <person name="Sucgang R."/>
            <person name="Berriman M."/>
            <person name="Song J."/>
            <person name="Olsen R."/>
            <person name="Szafranski K."/>
            <person name="Xu Q."/>
            <person name="Tunggal B."/>
            <person name="Kummerfeld S."/>
            <person name="Madera M."/>
            <person name="Konfortov B.A."/>
            <person name="Rivero F."/>
            <person name="Bankier A.T."/>
            <person name="Lehmann R."/>
            <person name="Hamlin N."/>
            <person name="Davies R."/>
            <person name="Gaudet P."/>
            <person name="Fey P."/>
            <person name="Pilcher K."/>
            <person name="Chen G."/>
            <person name="Saunders D."/>
            <person name="Sodergren E.J."/>
            <person name="Davis P."/>
            <person name="Kerhornou A."/>
            <person name="Nie X."/>
            <person name="Hall N."/>
            <person name="Anjard C."/>
            <person name="Hemphill L."/>
            <person name="Bason N."/>
            <person name="Farbrother P."/>
            <person name="Desany B."/>
            <person name="Just E."/>
            <person name="Morio T."/>
            <person name="Rost R."/>
            <person name="Churcher C.M."/>
            <person name="Cooper J."/>
            <person name="Haydock S."/>
            <person name="van Driessche N."/>
            <person name="Cronin A."/>
            <person name="Goodhead I."/>
            <person name="Muzny D.M."/>
            <person name="Mourier T."/>
            <person name="Pain A."/>
            <person name="Lu M."/>
            <person name="Harper D."/>
            <person name="Lindsay R."/>
            <person name="Hauser H."/>
            <person name="James K.D."/>
            <person name="Quiles M."/>
            <person name="Madan Babu M."/>
            <person name="Saito T."/>
            <person name="Buchrieser C."/>
            <person name="Wardroper A."/>
            <person name="Felder M."/>
            <person name="Thangavelu M."/>
            <person name="Johnson D."/>
            <person name="Knights A."/>
            <person name="Loulseged H."/>
            <person name="Mungall K.L."/>
            <person name="Oliver K."/>
            <person name="Price C."/>
            <person name="Quail M.A."/>
            <person name="Urushihara H."/>
            <person name="Hernandez J."/>
            <person name="Rabbinowitsch E."/>
            <person name="Steffen D."/>
            <person name="Sanders M."/>
            <person name="Ma J."/>
            <person name="Kohara Y."/>
            <person name="Sharp S."/>
            <person name="Simmonds M.N."/>
            <person name="Spiegler S."/>
            <person name="Tivey A."/>
            <person name="Sugano S."/>
            <person name="White B."/>
            <person name="Walker D."/>
            <person name="Woodward J.R."/>
            <person name="Winckler T."/>
            <person name="Tanaka Y."/>
            <person name="Shaulsky G."/>
            <person name="Schleicher M."/>
            <person name="Weinstock G.M."/>
            <person name="Rosenthal A."/>
            <person name="Cox E.C."/>
            <person name="Chisholm R.L."/>
            <person name="Gibbs R.A."/>
            <person name="Loomis W.F."/>
            <person name="Platzer M."/>
            <person name="Kay R.R."/>
            <person name="Williams J.G."/>
            <person name="Dear P.H."/>
            <person name="Noegel A.A."/>
            <person name="Barrell B.G."/>
            <person name="Kuspa A."/>
        </authorList>
    </citation>
    <scope>NUCLEOTIDE SEQUENCE [LARGE SCALE GENOMIC DNA]</scope>
    <source>
        <strain>AX4</strain>
    </source>
</reference>
<comment type="function">
    <text evidence="1">Rho GTPase-activating protein involved in the signal transduction pathway.</text>
</comment>
<comment type="subcellular location">
    <subcellularLocation>
        <location evidence="1">Cytoplasm</location>
    </subcellularLocation>
</comment>
<evidence type="ECO:0000250" key="1"/>
<evidence type="ECO:0000255" key="2"/>
<evidence type="ECO:0000255" key="3">
    <source>
        <dbReference type="PROSITE-ProRule" id="PRU00172"/>
    </source>
</evidence>
<evidence type="ECO:0000256" key="4">
    <source>
        <dbReference type="SAM" id="MobiDB-lite"/>
    </source>
</evidence>
<organism>
    <name type="scientific">Dictyostelium discoideum</name>
    <name type="common">Social amoeba</name>
    <dbReference type="NCBI Taxonomy" id="44689"/>
    <lineage>
        <taxon>Eukaryota</taxon>
        <taxon>Amoebozoa</taxon>
        <taxon>Evosea</taxon>
        <taxon>Eumycetozoa</taxon>
        <taxon>Dictyostelia</taxon>
        <taxon>Dictyosteliales</taxon>
        <taxon>Dictyosteliaceae</taxon>
        <taxon>Dictyostelium</taxon>
    </lineage>
</organism>
<dbReference type="EMBL" id="AAFI02000075">
    <property type="protein sequence ID" value="EAL64838.1"/>
    <property type="molecule type" value="Genomic_DNA"/>
</dbReference>
<dbReference type="RefSeq" id="XP_638352.1">
    <property type="nucleotide sequence ID" value="XM_633260.1"/>
</dbReference>
<dbReference type="SMR" id="Q54NL0"/>
<dbReference type="FunCoup" id="Q54NL0">
    <property type="interactions" value="625"/>
</dbReference>
<dbReference type="STRING" id="44689.Q54NL0"/>
<dbReference type="PaxDb" id="44689-DDB0191387"/>
<dbReference type="EnsemblProtists" id="EAL64838">
    <property type="protein sequence ID" value="EAL64838"/>
    <property type="gene ID" value="DDB_G0285163"/>
</dbReference>
<dbReference type="GeneID" id="8624977"/>
<dbReference type="KEGG" id="ddi:DDB_G0285163"/>
<dbReference type="dictyBase" id="DDB_G0285163">
    <property type="gene designation" value="gacT"/>
</dbReference>
<dbReference type="VEuPathDB" id="AmoebaDB:DDB_G0285163"/>
<dbReference type="eggNOG" id="KOG4370">
    <property type="taxonomic scope" value="Eukaryota"/>
</dbReference>
<dbReference type="HOGENOM" id="CLU_298177_0_0_1"/>
<dbReference type="InParanoid" id="Q54NL0"/>
<dbReference type="OMA" id="VSPIEPY"/>
<dbReference type="PRO" id="PR:Q54NL0"/>
<dbReference type="Proteomes" id="UP000002195">
    <property type="component" value="Chromosome 4"/>
</dbReference>
<dbReference type="GO" id="GO:0005737">
    <property type="term" value="C:cytoplasm"/>
    <property type="evidence" value="ECO:0000318"/>
    <property type="project" value="GO_Central"/>
</dbReference>
<dbReference type="GO" id="GO:0005886">
    <property type="term" value="C:plasma membrane"/>
    <property type="evidence" value="ECO:0000318"/>
    <property type="project" value="GO_Central"/>
</dbReference>
<dbReference type="GO" id="GO:0005096">
    <property type="term" value="F:GTPase activator activity"/>
    <property type="evidence" value="ECO:0000318"/>
    <property type="project" value="GO_Central"/>
</dbReference>
<dbReference type="GO" id="GO:0007264">
    <property type="term" value="P:small GTPase-mediated signal transduction"/>
    <property type="evidence" value="ECO:0000318"/>
    <property type="project" value="GO_Central"/>
</dbReference>
<dbReference type="GO" id="GO:0030587">
    <property type="term" value="P:sorocarp development"/>
    <property type="evidence" value="ECO:0007001"/>
    <property type="project" value="dictyBase"/>
</dbReference>
<dbReference type="CDD" id="cd00159">
    <property type="entry name" value="RhoGAP"/>
    <property type="match status" value="1"/>
</dbReference>
<dbReference type="FunFam" id="1.10.555.10:FF:000151">
    <property type="match status" value="1"/>
</dbReference>
<dbReference type="Gene3D" id="1.10.555.10">
    <property type="entry name" value="Rho GTPase activation protein"/>
    <property type="match status" value="1"/>
</dbReference>
<dbReference type="InterPro" id="IPR050729">
    <property type="entry name" value="Rho-GAP"/>
</dbReference>
<dbReference type="InterPro" id="IPR008936">
    <property type="entry name" value="Rho_GTPase_activation_prot"/>
</dbReference>
<dbReference type="InterPro" id="IPR000198">
    <property type="entry name" value="RhoGAP_dom"/>
</dbReference>
<dbReference type="PANTHER" id="PTHR23176:SF12">
    <property type="entry name" value="RHO GTPASE-ACTIVATING PROTEIN GACT"/>
    <property type="match status" value="1"/>
</dbReference>
<dbReference type="PANTHER" id="PTHR23176">
    <property type="entry name" value="RHO/RAC/CDC GTPASE-ACTIVATING PROTEIN"/>
    <property type="match status" value="1"/>
</dbReference>
<dbReference type="Pfam" id="PF00620">
    <property type="entry name" value="RhoGAP"/>
    <property type="match status" value="1"/>
</dbReference>
<dbReference type="SMART" id="SM00324">
    <property type="entry name" value="RhoGAP"/>
    <property type="match status" value="1"/>
</dbReference>
<dbReference type="SUPFAM" id="SSF48350">
    <property type="entry name" value="GTPase activation domain, GAP"/>
    <property type="match status" value="1"/>
</dbReference>
<dbReference type="PROSITE" id="PS50238">
    <property type="entry name" value="RHOGAP"/>
    <property type="match status" value="1"/>
</dbReference>
<protein>
    <recommendedName>
        <fullName>Rho GTPase-activating protein gacT</fullName>
    </recommendedName>
    <alternativeName>
        <fullName>GTPase activating factor for raC protein T</fullName>
    </alternativeName>
</protein>
<proteinExistence type="inferred from homology"/>
<feature type="chain" id="PRO_0000380217" description="Rho GTPase-activating protein gacT">
    <location>
        <begin position="1"/>
        <end position="1009"/>
    </location>
</feature>
<feature type="domain" description="Rho-GAP" evidence="3">
    <location>
        <begin position="163"/>
        <end position="351"/>
    </location>
</feature>
<feature type="region of interest" description="Disordered" evidence="4">
    <location>
        <begin position="1"/>
        <end position="72"/>
    </location>
</feature>
<feature type="region of interest" description="Disordered" evidence="4">
    <location>
        <begin position="89"/>
        <end position="117"/>
    </location>
</feature>
<feature type="region of interest" description="Disordered" evidence="4">
    <location>
        <begin position="388"/>
        <end position="420"/>
    </location>
</feature>
<feature type="region of interest" description="Disordered" evidence="4">
    <location>
        <begin position="432"/>
        <end position="482"/>
    </location>
</feature>
<feature type="region of interest" description="Disordered" evidence="4">
    <location>
        <begin position="508"/>
        <end position="571"/>
    </location>
</feature>
<feature type="region of interest" description="Disordered" evidence="4">
    <location>
        <begin position="686"/>
        <end position="713"/>
    </location>
</feature>
<feature type="region of interest" description="Disordered" evidence="4">
    <location>
        <begin position="759"/>
        <end position="781"/>
    </location>
</feature>
<feature type="region of interest" description="Disordered" evidence="4">
    <location>
        <begin position="965"/>
        <end position="1009"/>
    </location>
</feature>
<feature type="coiled-coil region" evidence="2">
    <location>
        <begin position="580"/>
        <end position="656"/>
    </location>
</feature>
<feature type="coiled-coil region" evidence="2">
    <location>
        <begin position="715"/>
        <end position="743"/>
    </location>
</feature>
<feature type="coiled-coil region" evidence="2">
    <location>
        <begin position="839"/>
        <end position="952"/>
    </location>
</feature>
<feature type="compositionally biased region" description="Basic and acidic residues" evidence="4">
    <location>
        <begin position="12"/>
        <end position="23"/>
    </location>
</feature>
<feature type="compositionally biased region" description="Low complexity" evidence="4">
    <location>
        <begin position="26"/>
        <end position="35"/>
    </location>
</feature>
<feature type="compositionally biased region" description="Polar residues" evidence="4">
    <location>
        <begin position="58"/>
        <end position="69"/>
    </location>
</feature>
<feature type="compositionally biased region" description="Basic residues" evidence="4">
    <location>
        <begin position="89"/>
        <end position="103"/>
    </location>
</feature>
<feature type="compositionally biased region" description="Low complexity" evidence="4">
    <location>
        <begin position="104"/>
        <end position="117"/>
    </location>
</feature>
<feature type="compositionally biased region" description="Low complexity" evidence="4">
    <location>
        <begin position="394"/>
        <end position="415"/>
    </location>
</feature>
<feature type="compositionally biased region" description="Low complexity" evidence="4">
    <location>
        <begin position="432"/>
        <end position="468"/>
    </location>
</feature>
<feature type="compositionally biased region" description="Low complexity" evidence="4">
    <location>
        <begin position="512"/>
        <end position="521"/>
    </location>
</feature>
<feature type="compositionally biased region" description="Gly residues" evidence="4">
    <location>
        <begin position="522"/>
        <end position="546"/>
    </location>
</feature>
<feature type="compositionally biased region" description="Low complexity" evidence="4">
    <location>
        <begin position="547"/>
        <end position="557"/>
    </location>
</feature>
<feature type="compositionally biased region" description="Low complexity" evidence="4">
    <location>
        <begin position="695"/>
        <end position="713"/>
    </location>
</feature>
<feature type="compositionally biased region" description="Polar residues" evidence="4">
    <location>
        <begin position="766"/>
        <end position="781"/>
    </location>
</feature>
<feature type="compositionally biased region" description="Polar residues" evidence="4">
    <location>
        <begin position="967"/>
        <end position="980"/>
    </location>
</feature>
<feature type="compositionally biased region" description="Low complexity" evidence="4">
    <location>
        <begin position="981"/>
        <end position="1009"/>
    </location>
</feature>
<feature type="site" description="Arginine finger; crucial for GTP hydrolysis by stabilizing the transition state" evidence="3">
    <location>
        <position position="199"/>
    </location>
</feature>
<gene>
    <name type="primary">gacT</name>
    <name type="synonym">DG1094</name>
    <name type="ORF">DDB_G0285163</name>
</gene>
<name>GACT_DICDI</name>
<sequence length="1009" mass="114239">MKNIFRRSVQIFHKDKKEGDKQDYTGSSGSSGNSGTDRSPTSSLSKKDKKHSKHHQNESYSGDNSPTLSRNHHDEIGHLQYTANHHIATSHHSHSHNHNHNHNHQLTQPIQQQQQTQHVNLASNNYYIRHIYTNNQYDETTQIVMNNGIPFIYNPNARKIFGVPLTQVPCRAGSNVPIIIEKLIDHIERTSLNSEGLFRIPGVDLTINQYIKLFDNGEDVDVSPIEPYTAAGLLKRFFRDLPVFVPQSINKRVVSLFIDEEGKKKPVDMEILSNLRVLVHQLPTVHFEVMQELTNLLGKLMSRSDQNKMTISNIAICLVPTLNCVPAIVTYSIQMHDFFYNEVFPQHHLYYMRPYEEKLVESAPTQPINIMTTSGGEKRYSSRPASITISGLLPSNGQNNSPSSSTITSTTITSPHDSTAPITFTVTTTFSPEQQQQMLQQQQQQQQQQEKQSSSSLSQSQQSIQPISDTNSTKSDRRTFRVDPNLDLTQYIEDTQYNVNRNYLYNGGPSGTTGTTPNGGSLSIGGGNGGNGGSSLSVGSGGGNGGSSLSVGSNTSVGVGGGGGGNNTTDQSKIYRRSVAYTNNEDTKAAIQQIKEKIDRYSKEKKTREEKEREKLLRYSIDLERYKDRTINNKQEKRASRDINKEIEREIEKKRLSPRERLNLFGLSSSSSSVNSTLTRSTANIISTIDGSGGSNRNSKNYGNGSSSSSNRRYSNTINQQLQMQLQQLQIQQQQYQQTQQSQIPLQYQQQQQQQQQQTTTTTTTSSGSNRFSSNRYKPVDLTQSSSNFRYSREIYDDDYYSNNNLMMFGNEQPNQTPISVSSSSAFTRQRSQSCFEPENLVLLQQQYQQYQQQQQQQQQIPFQANPQYSNAVIEQKLDQIRDTINNLHRDNRVSRDYTHYLREVEDLRSSLQKETVVSNEFIKNIELEDKLRREEEKNQRLIEEIHLLETYFILKEKSKAKRLSTTKDLLTRSRSPTLPSSINMSTSSLGSSSSSAYNNNNNNNNVPK</sequence>